<reference key="1">
    <citation type="submission" date="2007-11" db="EMBL/GenBank/DDBJ databases">
        <authorList>
            <consortium name="The Salmonella enterica serovar Paratyphi B Genome Sequencing Project"/>
            <person name="McClelland M."/>
            <person name="Sanderson E.K."/>
            <person name="Porwollik S."/>
            <person name="Spieth J."/>
            <person name="Clifton W.S."/>
            <person name="Fulton R."/>
            <person name="Cordes M."/>
            <person name="Wollam A."/>
            <person name="Shah N."/>
            <person name="Pepin K."/>
            <person name="Bhonagiri V."/>
            <person name="Nash W."/>
            <person name="Johnson M."/>
            <person name="Thiruvilangam P."/>
            <person name="Wilson R."/>
        </authorList>
    </citation>
    <scope>NUCLEOTIDE SEQUENCE [LARGE SCALE GENOMIC DNA]</scope>
    <source>
        <strain>ATCC BAA-1250 / SPB7</strain>
    </source>
</reference>
<name>LPXK_SALPB</name>
<gene>
    <name evidence="1" type="primary">lpxK</name>
    <name type="ordered locus">SPAB_02529</name>
</gene>
<organism>
    <name type="scientific">Salmonella paratyphi B (strain ATCC BAA-1250 / SPB7)</name>
    <dbReference type="NCBI Taxonomy" id="1016998"/>
    <lineage>
        <taxon>Bacteria</taxon>
        <taxon>Pseudomonadati</taxon>
        <taxon>Pseudomonadota</taxon>
        <taxon>Gammaproteobacteria</taxon>
        <taxon>Enterobacterales</taxon>
        <taxon>Enterobacteriaceae</taxon>
        <taxon>Salmonella</taxon>
    </lineage>
</organism>
<proteinExistence type="inferred from homology"/>
<feature type="chain" id="PRO_1000123742" description="Tetraacyldisaccharide 4'-kinase">
    <location>
        <begin position="1"/>
        <end position="325"/>
    </location>
</feature>
<feature type="binding site" evidence="1">
    <location>
        <begin position="55"/>
        <end position="62"/>
    </location>
    <ligand>
        <name>ATP</name>
        <dbReference type="ChEBI" id="CHEBI:30616"/>
    </ligand>
</feature>
<comment type="function">
    <text evidence="1">Transfers the gamma-phosphate of ATP to the 4'-position of a tetraacyldisaccharide 1-phosphate intermediate (termed DS-1-P) to form tetraacyldisaccharide 1,4'-bis-phosphate (lipid IVA).</text>
</comment>
<comment type="catalytic activity">
    <reaction evidence="1">
        <text>a lipid A disaccharide + ATP = a lipid IVA + ADP + H(+)</text>
        <dbReference type="Rhea" id="RHEA:67840"/>
        <dbReference type="ChEBI" id="CHEBI:15378"/>
        <dbReference type="ChEBI" id="CHEBI:30616"/>
        <dbReference type="ChEBI" id="CHEBI:176343"/>
        <dbReference type="ChEBI" id="CHEBI:176425"/>
        <dbReference type="ChEBI" id="CHEBI:456216"/>
        <dbReference type="EC" id="2.7.1.130"/>
    </reaction>
</comment>
<comment type="pathway">
    <text evidence="1">Glycolipid biosynthesis; lipid IV(A) biosynthesis; lipid IV(A) from (3R)-3-hydroxytetradecanoyl-[acyl-carrier-protein] and UDP-N-acetyl-alpha-D-glucosamine: step 6/6.</text>
</comment>
<comment type="similarity">
    <text evidence="1">Belongs to the LpxK family.</text>
</comment>
<protein>
    <recommendedName>
        <fullName evidence="1">Tetraacyldisaccharide 4'-kinase</fullName>
        <ecNumber evidence="1">2.7.1.130</ecNumber>
    </recommendedName>
    <alternativeName>
        <fullName evidence="1">Lipid A 4'-kinase</fullName>
    </alternativeName>
</protein>
<sequence>MIARIWSGESPLWRLLLPLSWLYGLVSGAIRLSYKLGFKRAWRAPVPVVVVGNLTAGGNGKTPVVIWLVEKLQQRGVRVGVVSRGYGGKAAAYPLLLTPETTTAEAGDEPVLIYQRTGAPVAVAPERAAAVKAILAAHNVQIIITDDGLQHYRLARDIEIVVIDGVRRFGNGWWLPAGPMRERASRLKTVDAAIVNGGVARAGEIPMQLAPGLAVNLRTGARCDVAQLSNIVAMAGIGHPPRFFATLEACGAHPQKCVPLADHQTLAPADVQALVGEGQTLVMTEKDAVKCRAFAEDNWWFLPVDARLSGEQPDKLLQHITSLVR</sequence>
<evidence type="ECO:0000255" key="1">
    <source>
        <dbReference type="HAMAP-Rule" id="MF_00409"/>
    </source>
</evidence>
<dbReference type="EC" id="2.7.1.130" evidence="1"/>
<dbReference type="EMBL" id="CP000886">
    <property type="protein sequence ID" value="ABX67909.1"/>
    <property type="molecule type" value="Genomic_DNA"/>
</dbReference>
<dbReference type="RefSeq" id="WP_000561681.1">
    <property type="nucleotide sequence ID" value="NC_010102.1"/>
</dbReference>
<dbReference type="SMR" id="A9N7U7"/>
<dbReference type="KEGG" id="spq:SPAB_02529"/>
<dbReference type="PATRIC" id="fig|1016998.12.peg.2396"/>
<dbReference type="HOGENOM" id="CLU_038816_2_0_6"/>
<dbReference type="BioCyc" id="SENT1016998:SPAB_RS10280-MONOMER"/>
<dbReference type="UniPathway" id="UPA00359">
    <property type="reaction ID" value="UER00482"/>
</dbReference>
<dbReference type="Proteomes" id="UP000008556">
    <property type="component" value="Chromosome"/>
</dbReference>
<dbReference type="GO" id="GO:0005886">
    <property type="term" value="C:plasma membrane"/>
    <property type="evidence" value="ECO:0007669"/>
    <property type="project" value="TreeGrafter"/>
</dbReference>
<dbReference type="GO" id="GO:0005524">
    <property type="term" value="F:ATP binding"/>
    <property type="evidence" value="ECO:0007669"/>
    <property type="project" value="UniProtKB-UniRule"/>
</dbReference>
<dbReference type="GO" id="GO:0009029">
    <property type="term" value="F:tetraacyldisaccharide 4'-kinase activity"/>
    <property type="evidence" value="ECO:0007669"/>
    <property type="project" value="UniProtKB-UniRule"/>
</dbReference>
<dbReference type="GO" id="GO:0009245">
    <property type="term" value="P:lipid A biosynthetic process"/>
    <property type="evidence" value="ECO:0007669"/>
    <property type="project" value="UniProtKB-UniRule"/>
</dbReference>
<dbReference type="GO" id="GO:0009244">
    <property type="term" value="P:lipopolysaccharide core region biosynthetic process"/>
    <property type="evidence" value="ECO:0007669"/>
    <property type="project" value="TreeGrafter"/>
</dbReference>
<dbReference type="HAMAP" id="MF_00409">
    <property type="entry name" value="LpxK"/>
    <property type="match status" value="1"/>
</dbReference>
<dbReference type="InterPro" id="IPR003758">
    <property type="entry name" value="LpxK"/>
</dbReference>
<dbReference type="InterPro" id="IPR027417">
    <property type="entry name" value="P-loop_NTPase"/>
</dbReference>
<dbReference type="NCBIfam" id="TIGR00682">
    <property type="entry name" value="lpxK"/>
    <property type="match status" value="1"/>
</dbReference>
<dbReference type="PANTHER" id="PTHR42724">
    <property type="entry name" value="TETRAACYLDISACCHARIDE 4'-KINASE"/>
    <property type="match status" value="1"/>
</dbReference>
<dbReference type="PANTHER" id="PTHR42724:SF1">
    <property type="entry name" value="TETRAACYLDISACCHARIDE 4'-KINASE, MITOCHONDRIAL-RELATED"/>
    <property type="match status" value="1"/>
</dbReference>
<dbReference type="Pfam" id="PF02606">
    <property type="entry name" value="LpxK"/>
    <property type="match status" value="1"/>
</dbReference>
<dbReference type="SUPFAM" id="SSF52540">
    <property type="entry name" value="P-loop containing nucleoside triphosphate hydrolases"/>
    <property type="match status" value="1"/>
</dbReference>
<accession>A9N7U7</accession>
<keyword id="KW-0067">ATP-binding</keyword>
<keyword id="KW-0418">Kinase</keyword>
<keyword id="KW-0441">Lipid A biosynthesis</keyword>
<keyword id="KW-0444">Lipid biosynthesis</keyword>
<keyword id="KW-0443">Lipid metabolism</keyword>
<keyword id="KW-0547">Nucleotide-binding</keyword>
<keyword id="KW-0808">Transferase</keyword>